<keyword id="KW-0004">4Fe-4S</keyword>
<keyword id="KW-0408">Iron</keyword>
<keyword id="KW-0411">Iron-sulfur</keyword>
<keyword id="KW-0414">Isoprene biosynthesis</keyword>
<keyword id="KW-0479">Metal-binding</keyword>
<keyword id="KW-0560">Oxidoreductase</keyword>
<dbReference type="EC" id="1.17.7.4" evidence="1"/>
<dbReference type="EMBL" id="CP000050">
    <property type="protein sequence ID" value="AAY50131.1"/>
    <property type="molecule type" value="Genomic_DNA"/>
</dbReference>
<dbReference type="RefSeq" id="WP_011269934.1">
    <property type="nucleotide sequence ID" value="NZ_CP155948.1"/>
</dbReference>
<dbReference type="SMR" id="Q4US42"/>
<dbReference type="GeneID" id="58014258"/>
<dbReference type="KEGG" id="xcb:XC_3085"/>
<dbReference type="HOGENOM" id="CLU_027486_1_0_6"/>
<dbReference type="UniPathway" id="UPA00056">
    <property type="reaction ID" value="UER00097"/>
</dbReference>
<dbReference type="UniPathway" id="UPA00059">
    <property type="reaction ID" value="UER00105"/>
</dbReference>
<dbReference type="Proteomes" id="UP000000420">
    <property type="component" value="Chromosome"/>
</dbReference>
<dbReference type="GO" id="GO:0051539">
    <property type="term" value="F:4 iron, 4 sulfur cluster binding"/>
    <property type="evidence" value="ECO:0007669"/>
    <property type="project" value="UniProtKB-UniRule"/>
</dbReference>
<dbReference type="GO" id="GO:0051745">
    <property type="term" value="F:4-hydroxy-3-methylbut-2-enyl diphosphate reductase activity"/>
    <property type="evidence" value="ECO:0007669"/>
    <property type="project" value="UniProtKB-UniRule"/>
</dbReference>
<dbReference type="GO" id="GO:0046872">
    <property type="term" value="F:metal ion binding"/>
    <property type="evidence" value="ECO:0007669"/>
    <property type="project" value="UniProtKB-KW"/>
</dbReference>
<dbReference type="GO" id="GO:0050992">
    <property type="term" value="P:dimethylallyl diphosphate biosynthetic process"/>
    <property type="evidence" value="ECO:0007669"/>
    <property type="project" value="UniProtKB-UniRule"/>
</dbReference>
<dbReference type="GO" id="GO:0019288">
    <property type="term" value="P:isopentenyl diphosphate biosynthetic process, methylerythritol 4-phosphate pathway"/>
    <property type="evidence" value="ECO:0007669"/>
    <property type="project" value="UniProtKB-UniRule"/>
</dbReference>
<dbReference type="GO" id="GO:0016114">
    <property type="term" value="P:terpenoid biosynthetic process"/>
    <property type="evidence" value="ECO:0007669"/>
    <property type="project" value="UniProtKB-UniRule"/>
</dbReference>
<dbReference type="CDD" id="cd13944">
    <property type="entry name" value="lytB_ispH"/>
    <property type="match status" value="1"/>
</dbReference>
<dbReference type="Gene3D" id="3.40.50.11270">
    <property type="match status" value="1"/>
</dbReference>
<dbReference type="Gene3D" id="3.40.1010.20">
    <property type="entry name" value="4-hydroxy-3-methylbut-2-enyl diphosphate reductase, catalytic domain"/>
    <property type="match status" value="2"/>
</dbReference>
<dbReference type="HAMAP" id="MF_00191">
    <property type="entry name" value="IspH"/>
    <property type="match status" value="1"/>
</dbReference>
<dbReference type="InterPro" id="IPR003451">
    <property type="entry name" value="LytB/IspH"/>
</dbReference>
<dbReference type="NCBIfam" id="TIGR00216">
    <property type="entry name" value="ispH_lytB"/>
    <property type="match status" value="1"/>
</dbReference>
<dbReference type="NCBIfam" id="NF002188">
    <property type="entry name" value="PRK01045.1-2"/>
    <property type="match status" value="1"/>
</dbReference>
<dbReference type="NCBIfam" id="NF002190">
    <property type="entry name" value="PRK01045.1-4"/>
    <property type="match status" value="1"/>
</dbReference>
<dbReference type="PANTHER" id="PTHR30426">
    <property type="entry name" value="4-HYDROXY-3-METHYLBUT-2-ENYL DIPHOSPHATE REDUCTASE"/>
    <property type="match status" value="1"/>
</dbReference>
<dbReference type="PANTHER" id="PTHR30426:SF0">
    <property type="entry name" value="4-HYDROXY-3-METHYLBUT-2-ENYL DIPHOSPHATE REDUCTASE"/>
    <property type="match status" value="1"/>
</dbReference>
<dbReference type="Pfam" id="PF02401">
    <property type="entry name" value="LYTB"/>
    <property type="match status" value="1"/>
</dbReference>
<sequence>MDVLLANPRGFCAGVDRAIEIVKRAIETLGAPIYVRHEVVHNRFVVDDLKQRGAIFVEELDEVPDDATVIFSAHGVSQAVRVEAERRGLKVFDATCPLVTKVHFEVARHCRAGRDVVLIGHAGHPEVEGTMGQWSRERGPGQIYLVEDIEQVATLQVRQPENLAYTTQTTLSVDDTMGIIEALRVRYPAMQGPKHDDICYATQNRQDAVRDLARQCDLVLVVGSPNSSNSNRLSELARRDGVESYLIDNASEIDPAWIVGKQHIGLTAGASAPQVLVDGVLARLRELGANGVSELAGEPESMVFALPKELRLRLVS</sequence>
<gene>
    <name evidence="1" type="primary">ispH</name>
    <name type="ordered locus">XC_3085</name>
</gene>
<protein>
    <recommendedName>
        <fullName evidence="1">4-hydroxy-3-methylbut-2-enyl diphosphate reductase</fullName>
        <shortName evidence="1">HMBPP reductase</shortName>
        <ecNumber evidence="1">1.17.7.4</ecNumber>
    </recommendedName>
</protein>
<accession>Q4US42</accession>
<comment type="function">
    <text evidence="1">Catalyzes the conversion of 1-hydroxy-2-methyl-2-(E)-butenyl 4-diphosphate (HMBPP) into a mixture of isopentenyl diphosphate (IPP) and dimethylallyl diphosphate (DMAPP). Acts in the terminal step of the DOXP/MEP pathway for isoprenoid precursor biosynthesis.</text>
</comment>
<comment type="catalytic activity">
    <reaction evidence="1">
        <text>isopentenyl diphosphate + 2 oxidized [2Fe-2S]-[ferredoxin] + H2O = (2E)-4-hydroxy-3-methylbut-2-enyl diphosphate + 2 reduced [2Fe-2S]-[ferredoxin] + 2 H(+)</text>
        <dbReference type="Rhea" id="RHEA:24488"/>
        <dbReference type="Rhea" id="RHEA-COMP:10000"/>
        <dbReference type="Rhea" id="RHEA-COMP:10001"/>
        <dbReference type="ChEBI" id="CHEBI:15377"/>
        <dbReference type="ChEBI" id="CHEBI:15378"/>
        <dbReference type="ChEBI" id="CHEBI:33737"/>
        <dbReference type="ChEBI" id="CHEBI:33738"/>
        <dbReference type="ChEBI" id="CHEBI:128753"/>
        <dbReference type="ChEBI" id="CHEBI:128769"/>
        <dbReference type="EC" id="1.17.7.4"/>
    </reaction>
</comment>
<comment type="catalytic activity">
    <reaction evidence="1">
        <text>dimethylallyl diphosphate + 2 oxidized [2Fe-2S]-[ferredoxin] + H2O = (2E)-4-hydroxy-3-methylbut-2-enyl diphosphate + 2 reduced [2Fe-2S]-[ferredoxin] + 2 H(+)</text>
        <dbReference type="Rhea" id="RHEA:24825"/>
        <dbReference type="Rhea" id="RHEA-COMP:10000"/>
        <dbReference type="Rhea" id="RHEA-COMP:10001"/>
        <dbReference type="ChEBI" id="CHEBI:15377"/>
        <dbReference type="ChEBI" id="CHEBI:15378"/>
        <dbReference type="ChEBI" id="CHEBI:33737"/>
        <dbReference type="ChEBI" id="CHEBI:33738"/>
        <dbReference type="ChEBI" id="CHEBI:57623"/>
        <dbReference type="ChEBI" id="CHEBI:128753"/>
        <dbReference type="EC" id="1.17.7.4"/>
    </reaction>
</comment>
<comment type="cofactor">
    <cofactor evidence="1">
        <name>[4Fe-4S] cluster</name>
        <dbReference type="ChEBI" id="CHEBI:49883"/>
    </cofactor>
    <text evidence="1">Binds 1 [4Fe-4S] cluster per subunit.</text>
</comment>
<comment type="pathway">
    <text evidence="1">Isoprenoid biosynthesis; dimethylallyl diphosphate biosynthesis; dimethylallyl diphosphate from (2E)-4-hydroxy-3-methylbutenyl diphosphate: step 1/1.</text>
</comment>
<comment type="pathway">
    <text evidence="1">Isoprenoid biosynthesis; isopentenyl diphosphate biosynthesis via DXP pathway; isopentenyl diphosphate from 1-deoxy-D-xylulose 5-phosphate: step 6/6.</text>
</comment>
<comment type="similarity">
    <text evidence="1">Belongs to the IspH family.</text>
</comment>
<name>ISPH_XANC8</name>
<proteinExistence type="inferred from homology"/>
<organism>
    <name type="scientific">Xanthomonas campestris pv. campestris (strain 8004)</name>
    <dbReference type="NCBI Taxonomy" id="314565"/>
    <lineage>
        <taxon>Bacteria</taxon>
        <taxon>Pseudomonadati</taxon>
        <taxon>Pseudomonadota</taxon>
        <taxon>Gammaproteobacteria</taxon>
        <taxon>Lysobacterales</taxon>
        <taxon>Lysobacteraceae</taxon>
        <taxon>Xanthomonas</taxon>
    </lineage>
</organism>
<feature type="chain" id="PRO_1000021194" description="4-hydroxy-3-methylbut-2-enyl diphosphate reductase">
    <location>
        <begin position="1"/>
        <end position="316"/>
    </location>
</feature>
<feature type="active site" description="Proton donor" evidence="1">
    <location>
        <position position="126"/>
    </location>
</feature>
<feature type="binding site" evidence="1">
    <location>
        <position position="12"/>
    </location>
    <ligand>
        <name>[4Fe-4S] cluster</name>
        <dbReference type="ChEBI" id="CHEBI:49883"/>
    </ligand>
</feature>
<feature type="binding site" evidence="1">
    <location>
        <position position="41"/>
    </location>
    <ligand>
        <name>(2E)-4-hydroxy-3-methylbut-2-enyl diphosphate</name>
        <dbReference type="ChEBI" id="CHEBI:128753"/>
    </ligand>
</feature>
<feature type="binding site" evidence="1">
    <location>
        <position position="41"/>
    </location>
    <ligand>
        <name>dimethylallyl diphosphate</name>
        <dbReference type="ChEBI" id="CHEBI:57623"/>
    </ligand>
</feature>
<feature type="binding site" evidence="1">
    <location>
        <position position="41"/>
    </location>
    <ligand>
        <name>isopentenyl diphosphate</name>
        <dbReference type="ChEBI" id="CHEBI:128769"/>
    </ligand>
</feature>
<feature type="binding site" evidence="1">
    <location>
        <position position="74"/>
    </location>
    <ligand>
        <name>(2E)-4-hydroxy-3-methylbut-2-enyl diphosphate</name>
        <dbReference type="ChEBI" id="CHEBI:128753"/>
    </ligand>
</feature>
<feature type="binding site" evidence="1">
    <location>
        <position position="74"/>
    </location>
    <ligand>
        <name>dimethylallyl diphosphate</name>
        <dbReference type="ChEBI" id="CHEBI:57623"/>
    </ligand>
</feature>
<feature type="binding site" evidence="1">
    <location>
        <position position="74"/>
    </location>
    <ligand>
        <name>isopentenyl diphosphate</name>
        <dbReference type="ChEBI" id="CHEBI:128769"/>
    </ligand>
</feature>
<feature type="binding site" evidence="1">
    <location>
        <position position="96"/>
    </location>
    <ligand>
        <name>[4Fe-4S] cluster</name>
        <dbReference type="ChEBI" id="CHEBI:49883"/>
    </ligand>
</feature>
<feature type="binding site" evidence="1">
    <location>
        <position position="124"/>
    </location>
    <ligand>
        <name>(2E)-4-hydroxy-3-methylbut-2-enyl diphosphate</name>
        <dbReference type="ChEBI" id="CHEBI:128753"/>
    </ligand>
</feature>
<feature type="binding site" evidence="1">
    <location>
        <position position="124"/>
    </location>
    <ligand>
        <name>dimethylallyl diphosphate</name>
        <dbReference type="ChEBI" id="CHEBI:57623"/>
    </ligand>
</feature>
<feature type="binding site" evidence="1">
    <location>
        <position position="124"/>
    </location>
    <ligand>
        <name>isopentenyl diphosphate</name>
        <dbReference type="ChEBI" id="CHEBI:128769"/>
    </ligand>
</feature>
<feature type="binding site" evidence="1">
    <location>
        <position position="169"/>
    </location>
    <ligand>
        <name>(2E)-4-hydroxy-3-methylbut-2-enyl diphosphate</name>
        <dbReference type="ChEBI" id="CHEBI:128753"/>
    </ligand>
</feature>
<feature type="binding site" evidence="1">
    <location>
        <position position="199"/>
    </location>
    <ligand>
        <name>[4Fe-4S] cluster</name>
        <dbReference type="ChEBI" id="CHEBI:49883"/>
    </ligand>
</feature>
<feature type="binding site" evidence="1">
    <location>
        <position position="227"/>
    </location>
    <ligand>
        <name>(2E)-4-hydroxy-3-methylbut-2-enyl diphosphate</name>
        <dbReference type="ChEBI" id="CHEBI:128753"/>
    </ligand>
</feature>
<feature type="binding site" evidence="1">
    <location>
        <position position="227"/>
    </location>
    <ligand>
        <name>dimethylallyl diphosphate</name>
        <dbReference type="ChEBI" id="CHEBI:57623"/>
    </ligand>
</feature>
<feature type="binding site" evidence="1">
    <location>
        <position position="227"/>
    </location>
    <ligand>
        <name>isopentenyl diphosphate</name>
        <dbReference type="ChEBI" id="CHEBI:128769"/>
    </ligand>
</feature>
<feature type="binding site" evidence="1">
    <location>
        <position position="228"/>
    </location>
    <ligand>
        <name>(2E)-4-hydroxy-3-methylbut-2-enyl diphosphate</name>
        <dbReference type="ChEBI" id="CHEBI:128753"/>
    </ligand>
</feature>
<feature type="binding site" evidence="1">
    <location>
        <position position="228"/>
    </location>
    <ligand>
        <name>dimethylallyl diphosphate</name>
        <dbReference type="ChEBI" id="CHEBI:57623"/>
    </ligand>
</feature>
<feature type="binding site" evidence="1">
    <location>
        <position position="228"/>
    </location>
    <ligand>
        <name>isopentenyl diphosphate</name>
        <dbReference type="ChEBI" id="CHEBI:128769"/>
    </ligand>
</feature>
<feature type="binding site" evidence="1">
    <location>
        <position position="229"/>
    </location>
    <ligand>
        <name>(2E)-4-hydroxy-3-methylbut-2-enyl diphosphate</name>
        <dbReference type="ChEBI" id="CHEBI:128753"/>
    </ligand>
</feature>
<feature type="binding site" evidence="1">
    <location>
        <position position="229"/>
    </location>
    <ligand>
        <name>dimethylallyl diphosphate</name>
        <dbReference type="ChEBI" id="CHEBI:57623"/>
    </ligand>
</feature>
<feature type="binding site" evidence="1">
    <location>
        <position position="229"/>
    </location>
    <ligand>
        <name>isopentenyl diphosphate</name>
        <dbReference type="ChEBI" id="CHEBI:128769"/>
    </ligand>
</feature>
<feature type="binding site" evidence="1">
    <location>
        <position position="271"/>
    </location>
    <ligand>
        <name>(2E)-4-hydroxy-3-methylbut-2-enyl diphosphate</name>
        <dbReference type="ChEBI" id="CHEBI:128753"/>
    </ligand>
</feature>
<feature type="binding site" evidence="1">
    <location>
        <position position="271"/>
    </location>
    <ligand>
        <name>dimethylallyl diphosphate</name>
        <dbReference type="ChEBI" id="CHEBI:57623"/>
    </ligand>
</feature>
<feature type="binding site" evidence="1">
    <location>
        <position position="271"/>
    </location>
    <ligand>
        <name>isopentenyl diphosphate</name>
        <dbReference type="ChEBI" id="CHEBI:128769"/>
    </ligand>
</feature>
<evidence type="ECO:0000255" key="1">
    <source>
        <dbReference type="HAMAP-Rule" id="MF_00191"/>
    </source>
</evidence>
<reference key="1">
    <citation type="journal article" date="2005" name="Genome Res.">
        <title>Comparative and functional genomic analyses of the pathogenicity of phytopathogen Xanthomonas campestris pv. campestris.</title>
        <authorList>
            <person name="Qian W."/>
            <person name="Jia Y."/>
            <person name="Ren S.-X."/>
            <person name="He Y.-Q."/>
            <person name="Feng J.-X."/>
            <person name="Lu L.-F."/>
            <person name="Sun Q."/>
            <person name="Ying G."/>
            <person name="Tang D.-J."/>
            <person name="Tang H."/>
            <person name="Wu W."/>
            <person name="Hao P."/>
            <person name="Wang L."/>
            <person name="Jiang B.-L."/>
            <person name="Zeng S."/>
            <person name="Gu W.-Y."/>
            <person name="Lu G."/>
            <person name="Rong L."/>
            <person name="Tian Y."/>
            <person name="Yao Z."/>
            <person name="Fu G."/>
            <person name="Chen B."/>
            <person name="Fang R."/>
            <person name="Qiang B."/>
            <person name="Chen Z."/>
            <person name="Zhao G.-P."/>
            <person name="Tang J.-L."/>
            <person name="He C."/>
        </authorList>
    </citation>
    <scope>NUCLEOTIDE SEQUENCE [LARGE SCALE GENOMIC DNA]</scope>
    <source>
        <strain>8004</strain>
    </source>
</reference>